<protein>
    <recommendedName>
        <fullName evidence="1">Probable Fe(2+)-trafficking protein</fullName>
    </recommendedName>
</protein>
<keyword id="KW-0408">Iron</keyword>
<feature type="chain" id="PRO_0000214512" description="Probable Fe(2+)-trafficking protein">
    <location>
        <begin position="1"/>
        <end position="90"/>
    </location>
</feature>
<organism>
    <name type="scientific">Vibrio vulnificus (strain YJ016)</name>
    <dbReference type="NCBI Taxonomy" id="196600"/>
    <lineage>
        <taxon>Bacteria</taxon>
        <taxon>Pseudomonadati</taxon>
        <taxon>Pseudomonadota</taxon>
        <taxon>Gammaproteobacteria</taxon>
        <taxon>Vibrionales</taxon>
        <taxon>Vibrionaceae</taxon>
        <taxon>Vibrio</taxon>
    </lineage>
</organism>
<accession>Q7MHI4</accession>
<sequence length="90" mass="10614">MSRTVFCARLNKEADGLDFQLYPGELGKRIFDNISKEAWGQWQHKQTMLINEKKLNMMDPEHRKLLETEMVNFLFEGKEVHIEGYTPPSK</sequence>
<evidence type="ECO:0000255" key="1">
    <source>
        <dbReference type="HAMAP-Rule" id="MF_00686"/>
    </source>
</evidence>
<reference key="1">
    <citation type="journal article" date="2003" name="Genome Res.">
        <title>Comparative genome analysis of Vibrio vulnificus, a marine pathogen.</title>
        <authorList>
            <person name="Chen C.-Y."/>
            <person name="Wu K.-M."/>
            <person name="Chang Y.-C."/>
            <person name="Chang C.-H."/>
            <person name="Tsai H.-C."/>
            <person name="Liao T.-L."/>
            <person name="Liu Y.-M."/>
            <person name="Chen H.-J."/>
            <person name="Shen A.B.-T."/>
            <person name="Li J.-C."/>
            <person name="Su T.-L."/>
            <person name="Shao C.-P."/>
            <person name="Lee C.-T."/>
            <person name="Hor L.-I."/>
            <person name="Tsai S.-F."/>
        </authorList>
    </citation>
    <scope>NUCLEOTIDE SEQUENCE [LARGE SCALE GENOMIC DNA]</scope>
    <source>
        <strain>YJ016</strain>
    </source>
</reference>
<gene>
    <name type="ordered locus">VV2885</name>
</gene>
<dbReference type="EMBL" id="BA000037">
    <property type="protein sequence ID" value="BAC95649.1"/>
    <property type="molecule type" value="Genomic_DNA"/>
</dbReference>
<dbReference type="RefSeq" id="WP_011079450.1">
    <property type="nucleotide sequence ID" value="NC_005139.1"/>
</dbReference>
<dbReference type="SMR" id="Q7MHI4"/>
<dbReference type="STRING" id="672.VV93_v1c25910"/>
<dbReference type="KEGG" id="vvy:VV2885"/>
<dbReference type="eggNOG" id="COG2924">
    <property type="taxonomic scope" value="Bacteria"/>
</dbReference>
<dbReference type="HOGENOM" id="CLU_170994_0_0_6"/>
<dbReference type="Proteomes" id="UP000002675">
    <property type="component" value="Chromosome I"/>
</dbReference>
<dbReference type="GO" id="GO:0005829">
    <property type="term" value="C:cytosol"/>
    <property type="evidence" value="ECO:0007669"/>
    <property type="project" value="TreeGrafter"/>
</dbReference>
<dbReference type="GO" id="GO:0005506">
    <property type="term" value="F:iron ion binding"/>
    <property type="evidence" value="ECO:0007669"/>
    <property type="project" value="UniProtKB-UniRule"/>
</dbReference>
<dbReference type="GO" id="GO:0034599">
    <property type="term" value="P:cellular response to oxidative stress"/>
    <property type="evidence" value="ECO:0007669"/>
    <property type="project" value="TreeGrafter"/>
</dbReference>
<dbReference type="FunFam" id="1.10.3880.10:FF:000001">
    <property type="entry name" value="Probable Fe(2+)-trafficking protein"/>
    <property type="match status" value="1"/>
</dbReference>
<dbReference type="Gene3D" id="1.10.3880.10">
    <property type="entry name" value="Fe(II) trafficking protein YggX"/>
    <property type="match status" value="1"/>
</dbReference>
<dbReference type="HAMAP" id="MF_00686">
    <property type="entry name" value="Fe_traffic_YggX"/>
    <property type="match status" value="1"/>
</dbReference>
<dbReference type="InterPro" id="IPR007457">
    <property type="entry name" value="Fe_traffick_prot_YggX"/>
</dbReference>
<dbReference type="InterPro" id="IPR036766">
    <property type="entry name" value="Fe_traffick_prot_YggX_sf"/>
</dbReference>
<dbReference type="NCBIfam" id="NF003817">
    <property type="entry name" value="PRK05408.1"/>
    <property type="match status" value="1"/>
</dbReference>
<dbReference type="PANTHER" id="PTHR36965">
    <property type="entry name" value="FE(2+)-TRAFFICKING PROTEIN-RELATED"/>
    <property type="match status" value="1"/>
</dbReference>
<dbReference type="PANTHER" id="PTHR36965:SF1">
    <property type="entry name" value="FE(2+)-TRAFFICKING PROTEIN-RELATED"/>
    <property type="match status" value="1"/>
</dbReference>
<dbReference type="Pfam" id="PF04362">
    <property type="entry name" value="Iron_traffic"/>
    <property type="match status" value="1"/>
</dbReference>
<dbReference type="PIRSF" id="PIRSF029827">
    <property type="entry name" value="Fe_traffic_YggX"/>
    <property type="match status" value="1"/>
</dbReference>
<dbReference type="SUPFAM" id="SSF111148">
    <property type="entry name" value="YggX-like"/>
    <property type="match status" value="1"/>
</dbReference>
<comment type="function">
    <text evidence="1">Could be a mediator in iron transactions between iron acquisition and iron-requiring processes, such as synthesis and/or repair of Fe-S clusters in biosynthetic enzymes.</text>
</comment>
<comment type="similarity">
    <text evidence="1">Belongs to the Fe(2+)-trafficking protein family.</text>
</comment>
<proteinExistence type="inferred from homology"/>
<name>FETP_VIBVY</name>